<sequence length="164" mass="18374">MPDLRWKAYGVAALIFALDRFTKWLVETNVSVMDTYHVIPGFFDIVHSENRGVAFGILNDSTSEWRTTILVVLAGAAVIFIAAMLWNAQRLDRASFWGLSLILGGAAGNVFDRAMFGKVTDFLDLYYRDYHWHTFNVADSAIVVGSCLLLIDLLRPKRQAANVS</sequence>
<feature type="chain" id="PRO_0000289429" description="Lipoprotein signal peptidase">
    <location>
        <begin position="1"/>
        <end position="164"/>
    </location>
</feature>
<feature type="transmembrane region" description="Helical" evidence="1">
    <location>
        <begin position="68"/>
        <end position="88"/>
    </location>
</feature>
<feature type="transmembrane region" description="Helical" evidence="1">
    <location>
        <begin position="96"/>
        <end position="116"/>
    </location>
</feature>
<feature type="transmembrane region" description="Helical" evidence="1">
    <location>
        <begin position="134"/>
        <end position="154"/>
    </location>
</feature>
<feature type="active site" evidence="1">
    <location>
        <position position="121"/>
    </location>
</feature>
<feature type="active site" evidence="1">
    <location>
        <position position="139"/>
    </location>
</feature>
<dbReference type="EC" id="3.4.23.36" evidence="1"/>
<dbReference type="EMBL" id="CP000473">
    <property type="protein sequence ID" value="ABJ86301.1"/>
    <property type="molecule type" value="Genomic_DNA"/>
</dbReference>
<dbReference type="SMR" id="Q01VL4"/>
<dbReference type="FunCoup" id="Q01VL4">
    <property type="interactions" value="421"/>
</dbReference>
<dbReference type="STRING" id="234267.Acid_5352"/>
<dbReference type="KEGG" id="sus:Acid_5352"/>
<dbReference type="eggNOG" id="COG0597">
    <property type="taxonomic scope" value="Bacteria"/>
</dbReference>
<dbReference type="HOGENOM" id="CLU_083252_4_0_0"/>
<dbReference type="InParanoid" id="Q01VL4"/>
<dbReference type="OrthoDB" id="9810259at2"/>
<dbReference type="UniPathway" id="UPA00665"/>
<dbReference type="GO" id="GO:0005886">
    <property type="term" value="C:plasma membrane"/>
    <property type="evidence" value="ECO:0007669"/>
    <property type="project" value="UniProtKB-SubCell"/>
</dbReference>
<dbReference type="GO" id="GO:0004190">
    <property type="term" value="F:aspartic-type endopeptidase activity"/>
    <property type="evidence" value="ECO:0007669"/>
    <property type="project" value="UniProtKB-UniRule"/>
</dbReference>
<dbReference type="GO" id="GO:0006508">
    <property type="term" value="P:proteolysis"/>
    <property type="evidence" value="ECO:0007669"/>
    <property type="project" value="UniProtKB-KW"/>
</dbReference>
<dbReference type="HAMAP" id="MF_00161">
    <property type="entry name" value="LspA"/>
    <property type="match status" value="1"/>
</dbReference>
<dbReference type="InterPro" id="IPR001872">
    <property type="entry name" value="Peptidase_A8"/>
</dbReference>
<dbReference type="NCBIfam" id="TIGR00077">
    <property type="entry name" value="lspA"/>
    <property type="match status" value="1"/>
</dbReference>
<dbReference type="PANTHER" id="PTHR33695">
    <property type="entry name" value="LIPOPROTEIN SIGNAL PEPTIDASE"/>
    <property type="match status" value="1"/>
</dbReference>
<dbReference type="PANTHER" id="PTHR33695:SF1">
    <property type="entry name" value="LIPOPROTEIN SIGNAL PEPTIDASE"/>
    <property type="match status" value="1"/>
</dbReference>
<dbReference type="Pfam" id="PF01252">
    <property type="entry name" value="Peptidase_A8"/>
    <property type="match status" value="1"/>
</dbReference>
<dbReference type="PRINTS" id="PR00781">
    <property type="entry name" value="LIPOSIGPTASE"/>
</dbReference>
<evidence type="ECO:0000255" key="1">
    <source>
        <dbReference type="HAMAP-Rule" id="MF_00161"/>
    </source>
</evidence>
<reference key="1">
    <citation type="journal article" date="2009" name="Appl. Environ. Microbiol.">
        <title>Three genomes from the phylum Acidobacteria provide insight into the lifestyles of these microorganisms in soils.</title>
        <authorList>
            <person name="Ward N.L."/>
            <person name="Challacombe J.F."/>
            <person name="Janssen P.H."/>
            <person name="Henrissat B."/>
            <person name="Coutinho P.M."/>
            <person name="Wu M."/>
            <person name="Xie G."/>
            <person name="Haft D.H."/>
            <person name="Sait M."/>
            <person name="Badger J."/>
            <person name="Barabote R.D."/>
            <person name="Bradley B."/>
            <person name="Brettin T.S."/>
            <person name="Brinkac L.M."/>
            <person name="Bruce D."/>
            <person name="Creasy T."/>
            <person name="Daugherty S.C."/>
            <person name="Davidsen T.M."/>
            <person name="DeBoy R.T."/>
            <person name="Detter J.C."/>
            <person name="Dodson R.J."/>
            <person name="Durkin A.S."/>
            <person name="Ganapathy A."/>
            <person name="Gwinn-Giglio M."/>
            <person name="Han C.S."/>
            <person name="Khouri H."/>
            <person name="Kiss H."/>
            <person name="Kothari S.P."/>
            <person name="Madupu R."/>
            <person name="Nelson K.E."/>
            <person name="Nelson W.C."/>
            <person name="Paulsen I."/>
            <person name="Penn K."/>
            <person name="Ren Q."/>
            <person name="Rosovitz M.J."/>
            <person name="Selengut J.D."/>
            <person name="Shrivastava S."/>
            <person name="Sullivan S.A."/>
            <person name="Tapia R."/>
            <person name="Thompson L.S."/>
            <person name="Watkins K.L."/>
            <person name="Yang Q."/>
            <person name="Yu C."/>
            <person name="Zafar N."/>
            <person name="Zhou L."/>
            <person name="Kuske C.R."/>
        </authorList>
    </citation>
    <scope>NUCLEOTIDE SEQUENCE [LARGE SCALE GENOMIC DNA]</scope>
    <source>
        <strain>Ellin6076</strain>
    </source>
</reference>
<proteinExistence type="inferred from homology"/>
<protein>
    <recommendedName>
        <fullName evidence="1">Lipoprotein signal peptidase</fullName>
        <ecNumber evidence="1">3.4.23.36</ecNumber>
    </recommendedName>
    <alternativeName>
        <fullName evidence="1">Prolipoprotein signal peptidase</fullName>
    </alternativeName>
    <alternativeName>
        <fullName evidence="1">Signal peptidase II</fullName>
        <shortName evidence="1">SPase II</shortName>
    </alternativeName>
</protein>
<gene>
    <name evidence="1" type="primary">lspA</name>
    <name type="ordered locus">Acid_5352</name>
</gene>
<keyword id="KW-0064">Aspartyl protease</keyword>
<keyword id="KW-0997">Cell inner membrane</keyword>
<keyword id="KW-1003">Cell membrane</keyword>
<keyword id="KW-0378">Hydrolase</keyword>
<keyword id="KW-0472">Membrane</keyword>
<keyword id="KW-0645">Protease</keyword>
<keyword id="KW-0812">Transmembrane</keyword>
<keyword id="KW-1133">Transmembrane helix</keyword>
<comment type="function">
    <text evidence="1">This protein specifically catalyzes the removal of signal peptides from prolipoproteins.</text>
</comment>
<comment type="catalytic activity">
    <reaction evidence="1">
        <text>Release of signal peptides from bacterial membrane prolipoproteins. Hydrolyzes -Xaa-Yaa-Zaa-|-(S,diacylglyceryl)Cys-, in which Xaa is hydrophobic (preferably Leu), and Yaa (Ala or Ser) and Zaa (Gly or Ala) have small, neutral side chains.</text>
        <dbReference type="EC" id="3.4.23.36"/>
    </reaction>
</comment>
<comment type="pathway">
    <text evidence="1">Protein modification; lipoprotein biosynthesis (signal peptide cleavage).</text>
</comment>
<comment type="subcellular location">
    <subcellularLocation>
        <location evidence="1">Cell inner membrane</location>
        <topology evidence="1">Multi-pass membrane protein</topology>
    </subcellularLocation>
</comment>
<comment type="similarity">
    <text evidence="1">Belongs to the peptidase A8 family.</text>
</comment>
<organism>
    <name type="scientific">Solibacter usitatus (strain Ellin6076)</name>
    <dbReference type="NCBI Taxonomy" id="234267"/>
    <lineage>
        <taxon>Bacteria</taxon>
        <taxon>Pseudomonadati</taxon>
        <taxon>Acidobacteriota</taxon>
        <taxon>Terriglobia</taxon>
        <taxon>Bryobacterales</taxon>
        <taxon>Solibacteraceae</taxon>
        <taxon>Candidatus Solibacter</taxon>
    </lineage>
</organism>
<name>LSPA_SOLUE</name>
<accession>Q01VL4</accession>